<comment type="function">
    <text evidence="1 2">Component of the cytochrome c oxidase, the last enzyme in the mitochondrial electron transport chain which drives oxidative phosphorylation. The respiratory chain contains 3 multisubunit complexes succinate dehydrogenase (complex II, CII), ubiquinol-cytochrome c oxidoreductase (cytochrome b-c1 complex, complex III, CIII) and cytochrome c oxidase (complex IV, CIV), that cooperate to transfer electrons derived from NADH and succinate to molecular oxygen, creating an electrochemical gradient over the inner membrane that drives transmembrane transport and the ATP synthase. Cytochrome c oxidase is the component of the respiratory chain that catalyzes the reduction of oxygen to water. Electrons originating from reduced cytochrome c in the intermembrane space (IMS) are transferred via the dinuclear copper A center (CU(A)) of subunit 2 and heme A of subunit 1 to the active site in subunit 1, a binuclear center (BNC) formed by heme A3 and copper B (CU(B)). The BNC reduces molecular oxygen to 2 water molecules unsing 4 electrons from cytochrome c in the IMS and 4 protons from the mitochondrial matrix. Plays a role in the assembly and stabilization of complex IV (By similarity).</text>
</comment>
<comment type="pathway">
    <text evidence="1">Energy metabolism; oxidative phosphorylation.</text>
</comment>
<comment type="subunit">
    <text evidence="3 5 8">Component of the cytochrome c oxidase (complex IV, CIV), a multisubunit enzyme composed of 14 subunits. The complex is composed of a catalytic core of 3 subunits MT-CO1, MT-CO2 and MT-CO3, encoded in the mitochondrial DNA, and 11 supernumerary subunits COX4I1 (or COX4I2), COX5A, COX5B, COX6A2 (or COX6A1), COX6B1 (or COX6B2), COX6C, COX7A1 (or COX7A2), COX7B, COX7C, COX8B and NDUFA4, which are encoded in the nuclear genome (PubMed:8638158). The complex exists as a monomer or a dimer and forms supercomplexes (SCs) in the inner mitochondrial membrane with NADH-ubiquinone oxidoreductase (complex I, CI) and ubiquinol-cytochrome c oxidoreductase (cytochrome b-c1 complex, complex III, CIII), resulting in different assemblies (supercomplex SCI(1)III(2)IV(1) and megacomplex MCI(2)III(2)IV(2)) (PubMed:26698328, PubMed:27830641).</text>
</comment>
<comment type="subcellular location">
    <subcellularLocation>
        <location evidence="4 7">Mitochondrion inner membrane</location>
        <topology evidence="4 7">Single-pass membrane protein</topology>
    </subcellularLocation>
</comment>
<comment type="tissue specificity">
    <text>Heart/muscle specific isoform.</text>
</comment>
<comment type="similarity">
    <text evidence="9">Belongs to the cytochrome c oxidase subunit 6A family.</text>
</comment>
<sequence>MALPLKSLSRGLASAAKGDHGGTGARTWRFLTFGLALPSVALCTLNSWLHSGHRERPAFIPYHHLRIRTKPFSWGDGNHTFFHNPRVNPLPTGYEKP</sequence>
<accession>P07471</accession>
<accession>Q3SZ61</accession>
<dbReference type="EMBL" id="X56857">
    <property type="protein sequence ID" value="CAA40183.1"/>
    <property type="molecule type" value="mRNA"/>
</dbReference>
<dbReference type="EMBL" id="S64127">
    <property type="protein sequence ID" value="AAB27605.1"/>
    <property type="molecule type" value="Genomic_DNA"/>
</dbReference>
<dbReference type="EMBL" id="BC103117">
    <property type="protein sequence ID" value="AAI03118.1"/>
    <property type="molecule type" value="mRNA"/>
</dbReference>
<dbReference type="PIR" id="S35702">
    <property type="entry name" value="OGBO6"/>
</dbReference>
<dbReference type="RefSeq" id="NP_776947.1">
    <property type="nucleotide sequence ID" value="NM_174522.3"/>
</dbReference>
<dbReference type="PDB" id="1OCC">
    <property type="method" value="X-ray"/>
    <property type="resolution" value="2.80 A"/>
    <property type="chains" value="G/T=13-96"/>
</dbReference>
<dbReference type="PDB" id="1OCO">
    <property type="method" value="X-ray"/>
    <property type="resolution" value="2.80 A"/>
    <property type="chains" value="G/T=13-96"/>
</dbReference>
<dbReference type="PDB" id="1OCR">
    <property type="method" value="X-ray"/>
    <property type="resolution" value="2.35 A"/>
    <property type="chains" value="G/T=13-96"/>
</dbReference>
<dbReference type="PDB" id="1OCZ">
    <property type="method" value="X-ray"/>
    <property type="resolution" value="2.90 A"/>
    <property type="chains" value="G/T=13-96"/>
</dbReference>
<dbReference type="PDB" id="1V54">
    <property type="method" value="X-ray"/>
    <property type="resolution" value="1.80 A"/>
    <property type="chains" value="G/T=13-97"/>
</dbReference>
<dbReference type="PDB" id="1V55">
    <property type="method" value="X-ray"/>
    <property type="resolution" value="1.90 A"/>
    <property type="chains" value="G/T=13-97"/>
</dbReference>
<dbReference type="PDB" id="2DYR">
    <property type="method" value="X-ray"/>
    <property type="resolution" value="1.80 A"/>
    <property type="chains" value="G/T=13-97"/>
</dbReference>
<dbReference type="PDB" id="2DYS">
    <property type="method" value="X-ray"/>
    <property type="resolution" value="2.20 A"/>
    <property type="chains" value="G/T=13-97"/>
</dbReference>
<dbReference type="PDB" id="2EIJ">
    <property type="method" value="X-ray"/>
    <property type="resolution" value="1.90 A"/>
    <property type="chains" value="G/T=13-97"/>
</dbReference>
<dbReference type="PDB" id="2EIK">
    <property type="method" value="X-ray"/>
    <property type="resolution" value="2.10 A"/>
    <property type="chains" value="G/T=13-97"/>
</dbReference>
<dbReference type="PDB" id="2EIL">
    <property type="method" value="X-ray"/>
    <property type="resolution" value="2.10 A"/>
    <property type="chains" value="G/T=13-97"/>
</dbReference>
<dbReference type="PDB" id="2EIM">
    <property type="method" value="X-ray"/>
    <property type="resolution" value="2.60 A"/>
    <property type="chains" value="G/T=13-97"/>
</dbReference>
<dbReference type="PDB" id="2EIN">
    <property type="method" value="X-ray"/>
    <property type="resolution" value="2.70 A"/>
    <property type="chains" value="G/T=13-97"/>
</dbReference>
<dbReference type="PDB" id="2OCC">
    <property type="method" value="X-ray"/>
    <property type="resolution" value="2.30 A"/>
    <property type="chains" value="G/T=13-96"/>
</dbReference>
<dbReference type="PDB" id="2Y69">
    <property type="method" value="X-ray"/>
    <property type="resolution" value="1.95 A"/>
    <property type="chains" value="G/T=1-97"/>
</dbReference>
<dbReference type="PDB" id="2YBB">
    <property type="method" value="EM"/>
    <property type="resolution" value="19.00 A"/>
    <property type="chains" value="R=13-96"/>
</dbReference>
<dbReference type="PDB" id="2ZXW">
    <property type="method" value="X-ray"/>
    <property type="resolution" value="2.50 A"/>
    <property type="chains" value="G/T=13-97"/>
</dbReference>
<dbReference type="PDB" id="3ABK">
    <property type="method" value="X-ray"/>
    <property type="resolution" value="2.00 A"/>
    <property type="chains" value="G/T=13-97"/>
</dbReference>
<dbReference type="PDB" id="3ABL">
    <property type="method" value="X-ray"/>
    <property type="resolution" value="2.10 A"/>
    <property type="chains" value="G/T=13-97"/>
</dbReference>
<dbReference type="PDB" id="3ABM">
    <property type="method" value="X-ray"/>
    <property type="resolution" value="1.95 A"/>
    <property type="chains" value="G/T=13-97"/>
</dbReference>
<dbReference type="PDB" id="3AG1">
    <property type="method" value="X-ray"/>
    <property type="resolution" value="2.20 A"/>
    <property type="chains" value="G/T=13-97"/>
</dbReference>
<dbReference type="PDB" id="3AG2">
    <property type="method" value="X-ray"/>
    <property type="resolution" value="1.80 A"/>
    <property type="chains" value="G/T=13-97"/>
</dbReference>
<dbReference type="PDB" id="3AG3">
    <property type="method" value="X-ray"/>
    <property type="resolution" value="1.80 A"/>
    <property type="chains" value="G/T=13-97"/>
</dbReference>
<dbReference type="PDB" id="3AG4">
    <property type="method" value="X-ray"/>
    <property type="resolution" value="2.05 A"/>
    <property type="chains" value="G/T=13-97"/>
</dbReference>
<dbReference type="PDB" id="3ASN">
    <property type="method" value="X-ray"/>
    <property type="resolution" value="3.00 A"/>
    <property type="chains" value="G/T=13-97"/>
</dbReference>
<dbReference type="PDB" id="3ASO">
    <property type="method" value="X-ray"/>
    <property type="resolution" value="2.30 A"/>
    <property type="chains" value="G/T=13-97"/>
</dbReference>
<dbReference type="PDB" id="3WG7">
    <property type="method" value="X-ray"/>
    <property type="resolution" value="1.90 A"/>
    <property type="chains" value="G/T=13-97"/>
</dbReference>
<dbReference type="PDB" id="3X2Q">
    <property type="method" value="X-ray"/>
    <property type="resolution" value="2.00 A"/>
    <property type="chains" value="G/T=13-97"/>
</dbReference>
<dbReference type="PDB" id="5B1A">
    <property type="method" value="X-ray"/>
    <property type="resolution" value="1.50 A"/>
    <property type="chains" value="G/T=13-97"/>
</dbReference>
<dbReference type="PDB" id="5B1B">
    <property type="method" value="X-ray"/>
    <property type="resolution" value="1.60 A"/>
    <property type="chains" value="G/T=13-97"/>
</dbReference>
<dbReference type="PDB" id="5B3S">
    <property type="method" value="X-ray"/>
    <property type="resolution" value="1.68 A"/>
    <property type="chains" value="G/T=13-97"/>
</dbReference>
<dbReference type="PDB" id="5GPN">
    <property type="method" value="EM"/>
    <property type="resolution" value="5.40 A"/>
    <property type="chains" value="4=13-96"/>
</dbReference>
<dbReference type="PDB" id="5IY5">
    <property type="method" value="X-ray"/>
    <property type="resolution" value="2.00 A"/>
    <property type="chains" value="G/T=13-96"/>
</dbReference>
<dbReference type="PDB" id="5LUF">
    <property type="method" value="EM"/>
    <property type="resolution" value="9.10 A"/>
    <property type="chains" value="4=13-96"/>
</dbReference>
<dbReference type="PDB" id="5W97">
    <property type="method" value="X-ray"/>
    <property type="resolution" value="2.30 A"/>
    <property type="chains" value="G/g=13-97"/>
</dbReference>
<dbReference type="PDB" id="5WAU">
    <property type="method" value="X-ray"/>
    <property type="resolution" value="1.95 A"/>
    <property type="chains" value="G/g=13-97"/>
</dbReference>
<dbReference type="PDB" id="5X19">
    <property type="method" value="X-ray"/>
    <property type="resolution" value="2.20 A"/>
    <property type="chains" value="G/T=13-97"/>
</dbReference>
<dbReference type="PDB" id="5X1B">
    <property type="method" value="X-ray"/>
    <property type="resolution" value="2.40 A"/>
    <property type="chains" value="G/T=13-97"/>
</dbReference>
<dbReference type="PDB" id="5X1F">
    <property type="method" value="X-ray"/>
    <property type="resolution" value="2.20 A"/>
    <property type="chains" value="G/T=13-97"/>
</dbReference>
<dbReference type="PDB" id="5XDQ">
    <property type="method" value="X-ray"/>
    <property type="resolution" value="1.77 A"/>
    <property type="chains" value="G/T=13-97"/>
</dbReference>
<dbReference type="PDB" id="5XDX">
    <property type="method" value="X-ray"/>
    <property type="resolution" value="1.99 A"/>
    <property type="chains" value="G/T=13-97"/>
</dbReference>
<dbReference type="PDB" id="5XTH">
    <property type="method" value="EM"/>
    <property type="resolution" value="3.90 A"/>
    <property type="chains" value="3=13-96"/>
</dbReference>
<dbReference type="PDB" id="5XTI">
    <property type="method" value="EM"/>
    <property type="resolution" value="17.40 A"/>
    <property type="chains" value="3/B3=13-96"/>
</dbReference>
<dbReference type="PDB" id="5Z84">
    <property type="method" value="X-ray"/>
    <property type="resolution" value="1.85 A"/>
    <property type="chains" value="G/T=13-97"/>
</dbReference>
<dbReference type="PDB" id="5Z85">
    <property type="method" value="X-ray"/>
    <property type="resolution" value="1.85 A"/>
    <property type="chains" value="G/T=13-97"/>
</dbReference>
<dbReference type="PDB" id="5Z86">
    <property type="method" value="X-ray"/>
    <property type="resolution" value="1.85 A"/>
    <property type="chains" value="G/T=13-97"/>
</dbReference>
<dbReference type="PDB" id="5ZCO">
    <property type="method" value="X-ray"/>
    <property type="resolution" value="1.90 A"/>
    <property type="chains" value="G/T=13-97"/>
</dbReference>
<dbReference type="PDB" id="5ZCP">
    <property type="method" value="X-ray"/>
    <property type="resolution" value="1.65 A"/>
    <property type="chains" value="G/T=13-97"/>
</dbReference>
<dbReference type="PDB" id="5ZCQ">
    <property type="method" value="X-ray"/>
    <property type="resolution" value="1.65 A"/>
    <property type="chains" value="G/T=13-97"/>
</dbReference>
<dbReference type="PDB" id="6J8M">
    <property type="method" value="X-ray"/>
    <property type="resolution" value="1.90 A"/>
    <property type="chains" value="G/T=13-97"/>
</dbReference>
<dbReference type="PDB" id="6JUW">
    <property type="method" value="X-ray"/>
    <property type="resolution" value="1.80 A"/>
    <property type="chains" value="G/T=13-96"/>
</dbReference>
<dbReference type="PDB" id="6JY3">
    <property type="method" value="X-ray"/>
    <property type="resolution" value="1.85 A"/>
    <property type="chains" value="G=13-97"/>
</dbReference>
<dbReference type="PDB" id="6JY4">
    <property type="method" value="X-ray"/>
    <property type="resolution" value="1.95 A"/>
    <property type="chains" value="G=13-97"/>
</dbReference>
<dbReference type="PDB" id="6NKN">
    <property type="method" value="X-ray"/>
    <property type="resolution" value="2.50 A"/>
    <property type="chains" value="G/T=13-97"/>
</dbReference>
<dbReference type="PDB" id="6NMF">
    <property type="method" value="X-ray"/>
    <property type="resolution" value="2.80 A"/>
    <property type="chains" value="G/T=13-97"/>
</dbReference>
<dbReference type="PDB" id="6NMP">
    <property type="method" value="X-ray"/>
    <property type="resolution" value="2.90 A"/>
    <property type="chains" value="G/T=13-97"/>
</dbReference>
<dbReference type="PDB" id="7COH">
    <property type="method" value="X-ray"/>
    <property type="resolution" value="1.30 A"/>
    <property type="chains" value="G/T=13-97"/>
</dbReference>
<dbReference type="PDB" id="7CP5">
    <property type="method" value="X-ray"/>
    <property type="resolution" value="1.76 A"/>
    <property type="chains" value="G/T=13-96"/>
</dbReference>
<dbReference type="PDB" id="7D5W">
    <property type="method" value="X-ray"/>
    <property type="resolution" value="1.84 A"/>
    <property type="chains" value="G/T=13-96"/>
</dbReference>
<dbReference type="PDB" id="7D5X">
    <property type="method" value="X-ray"/>
    <property type="resolution" value="1.74 A"/>
    <property type="chains" value="G/T=13-96"/>
</dbReference>
<dbReference type="PDB" id="7DGQ">
    <property type="method" value="EM"/>
    <property type="resolution" value="5.00 A"/>
    <property type="chains" value="A6=1-97"/>
</dbReference>
<dbReference type="PDB" id="7DGR">
    <property type="method" value="EM"/>
    <property type="resolution" value="4.60 A"/>
    <property type="chains" value="A4=1-97"/>
</dbReference>
<dbReference type="PDB" id="7DGS">
    <property type="method" value="EM"/>
    <property type="resolution" value="7.80 A"/>
    <property type="chains" value="A4=1-97"/>
</dbReference>
<dbReference type="PDB" id="7DKF">
    <property type="method" value="EM"/>
    <property type="resolution" value="8.30 A"/>
    <property type="chains" value="G3=1-97"/>
</dbReference>
<dbReference type="PDB" id="7EV7">
    <property type="method" value="X-ray"/>
    <property type="resolution" value="1.70 A"/>
    <property type="chains" value="G/T=13-97"/>
</dbReference>
<dbReference type="PDB" id="7THU">
    <property type="method" value="X-ray"/>
    <property type="resolution" value="1.93 A"/>
    <property type="chains" value="GGG/TTT=13-97"/>
</dbReference>
<dbReference type="PDB" id="7TIE">
    <property type="method" value="X-ray"/>
    <property type="resolution" value="1.90 A"/>
    <property type="chains" value="GGG/TTT=13-97"/>
</dbReference>
<dbReference type="PDB" id="7TIH">
    <property type="method" value="X-ray"/>
    <property type="resolution" value="2.35 A"/>
    <property type="chains" value="GGG/TTT=13-97"/>
</dbReference>
<dbReference type="PDB" id="7TII">
    <property type="method" value="X-ray"/>
    <property type="resolution" value="2.45 A"/>
    <property type="chains" value="GGG/TTT=13-97"/>
</dbReference>
<dbReference type="PDB" id="7VUW">
    <property type="method" value="X-ray"/>
    <property type="resolution" value="1.60 A"/>
    <property type="chains" value="G/T=13-96"/>
</dbReference>
<dbReference type="PDB" id="7VVR">
    <property type="method" value="X-ray"/>
    <property type="resolution" value="1.65 A"/>
    <property type="chains" value="G/T=13-96"/>
</dbReference>
<dbReference type="PDB" id="7W3E">
    <property type="method" value="X-ray"/>
    <property type="resolution" value="1.45 A"/>
    <property type="chains" value="G/T=13-96"/>
</dbReference>
<dbReference type="PDB" id="7XMA">
    <property type="method" value="X-ray"/>
    <property type="resolution" value="2.20 A"/>
    <property type="chains" value="G/T=13-96"/>
</dbReference>
<dbReference type="PDB" id="7XMB">
    <property type="method" value="X-ray"/>
    <property type="resolution" value="2.20 A"/>
    <property type="chains" value="G/T=13-96"/>
</dbReference>
<dbReference type="PDB" id="7Y44">
    <property type="method" value="X-ray"/>
    <property type="resolution" value="1.90 A"/>
    <property type="chains" value="G/T=13-97"/>
</dbReference>
<dbReference type="PDB" id="7YPY">
    <property type="method" value="X-ray"/>
    <property type="resolution" value="1.50 A"/>
    <property type="chains" value="G/T=13-97"/>
</dbReference>
<dbReference type="PDB" id="8D4T">
    <property type="method" value="EM"/>
    <property type="resolution" value="3.10 A"/>
    <property type="chains" value="T=24-95"/>
</dbReference>
<dbReference type="PDB" id="8GBT">
    <property type="method" value="X-ray"/>
    <property type="resolution" value="2.80 A"/>
    <property type="chains" value="G/T=13-97"/>
</dbReference>
<dbReference type="PDB" id="8GCQ">
    <property type="method" value="X-ray"/>
    <property type="resolution" value="2.38 A"/>
    <property type="chains" value="G/T=13-97"/>
</dbReference>
<dbReference type="PDB" id="8GVM">
    <property type="method" value="X-ray"/>
    <property type="resolution" value="1.85 A"/>
    <property type="chains" value="G/T=13-97"/>
</dbReference>
<dbReference type="PDB" id="8H8R">
    <property type="method" value="X-ray"/>
    <property type="resolution" value="1.70 A"/>
    <property type="chains" value="G/T=13-97"/>
</dbReference>
<dbReference type="PDB" id="8H8S">
    <property type="method" value="X-ray"/>
    <property type="resolution" value="1.70 A"/>
    <property type="chains" value="G/T=13-97"/>
</dbReference>
<dbReference type="PDB" id="8IJN">
    <property type="method" value="X-ray"/>
    <property type="resolution" value="1.80 A"/>
    <property type="chains" value="G/T=13-97"/>
</dbReference>
<dbReference type="PDBsum" id="1OCC"/>
<dbReference type="PDBsum" id="1OCO"/>
<dbReference type="PDBsum" id="1OCR"/>
<dbReference type="PDBsum" id="1OCZ"/>
<dbReference type="PDBsum" id="1V54"/>
<dbReference type="PDBsum" id="1V55"/>
<dbReference type="PDBsum" id="2DYR"/>
<dbReference type="PDBsum" id="2DYS"/>
<dbReference type="PDBsum" id="2EIJ"/>
<dbReference type="PDBsum" id="2EIK"/>
<dbReference type="PDBsum" id="2EIL"/>
<dbReference type="PDBsum" id="2EIM"/>
<dbReference type="PDBsum" id="2EIN"/>
<dbReference type="PDBsum" id="2OCC"/>
<dbReference type="PDBsum" id="2Y69"/>
<dbReference type="PDBsum" id="2YBB"/>
<dbReference type="PDBsum" id="2ZXW"/>
<dbReference type="PDBsum" id="3ABK"/>
<dbReference type="PDBsum" id="3ABL"/>
<dbReference type="PDBsum" id="3ABM"/>
<dbReference type="PDBsum" id="3AG1"/>
<dbReference type="PDBsum" id="3AG2"/>
<dbReference type="PDBsum" id="3AG3"/>
<dbReference type="PDBsum" id="3AG4"/>
<dbReference type="PDBsum" id="3ASN"/>
<dbReference type="PDBsum" id="3ASO"/>
<dbReference type="PDBsum" id="3WG7"/>
<dbReference type="PDBsum" id="3X2Q"/>
<dbReference type="PDBsum" id="5B1A"/>
<dbReference type="PDBsum" id="5B1B"/>
<dbReference type="PDBsum" id="5B3S"/>
<dbReference type="PDBsum" id="5GPN"/>
<dbReference type="PDBsum" id="5IY5"/>
<dbReference type="PDBsum" id="5LUF"/>
<dbReference type="PDBsum" id="5W97"/>
<dbReference type="PDBsum" id="5WAU"/>
<dbReference type="PDBsum" id="5X19"/>
<dbReference type="PDBsum" id="5X1B"/>
<dbReference type="PDBsum" id="5X1F"/>
<dbReference type="PDBsum" id="5XDQ"/>
<dbReference type="PDBsum" id="5XDX"/>
<dbReference type="PDBsum" id="5XTH"/>
<dbReference type="PDBsum" id="5XTI"/>
<dbReference type="PDBsum" id="5Z84"/>
<dbReference type="PDBsum" id="5Z85"/>
<dbReference type="PDBsum" id="5Z86"/>
<dbReference type="PDBsum" id="5ZCO"/>
<dbReference type="PDBsum" id="5ZCP"/>
<dbReference type="PDBsum" id="5ZCQ"/>
<dbReference type="PDBsum" id="6J8M"/>
<dbReference type="PDBsum" id="6JUW"/>
<dbReference type="PDBsum" id="6JY3"/>
<dbReference type="PDBsum" id="6JY4"/>
<dbReference type="PDBsum" id="6NKN"/>
<dbReference type="PDBsum" id="6NMF"/>
<dbReference type="PDBsum" id="6NMP"/>
<dbReference type="PDBsum" id="7COH"/>
<dbReference type="PDBsum" id="7CP5"/>
<dbReference type="PDBsum" id="7D5W"/>
<dbReference type="PDBsum" id="7D5X"/>
<dbReference type="PDBsum" id="7DGQ"/>
<dbReference type="PDBsum" id="7DGR"/>
<dbReference type="PDBsum" id="7DGS"/>
<dbReference type="PDBsum" id="7DKF"/>
<dbReference type="PDBsum" id="7EV7"/>
<dbReference type="PDBsum" id="7THU"/>
<dbReference type="PDBsum" id="7TIE"/>
<dbReference type="PDBsum" id="7TIH"/>
<dbReference type="PDBsum" id="7TII"/>
<dbReference type="PDBsum" id="7VUW"/>
<dbReference type="PDBsum" id="7VVR"/>
<dbReference type="PDBsum" id="7W3E"/>
<dbReference type="PDBsum" id="7XMA"/>
<dbReference type="PDBsum" id="7XMB"/>
<dbReference type="PDBsum" id="7Y44"/>
<dbReference type="PDBsum" id="7YPY"/>
<dbReference type="PDBsum" id="8D4T"/>
<dbReference type="PDBsum" id="8GBT"/>
<dbReference type="PDBsum" id="8GCQ"/>
<dbReference type="PDBsum" id="8GVM"/>
<dbReference type="PDBsum" id="8H8R"/>
<dbReference type="PDBsum" id="8H8S"/>
<dbReference type="PDBsum" id="8IJN"/>
<dbReference type="EMDB" id="EMD-27196"/>
<dbReference type="EMDB" id="EMD-30673"/>
<dbReference type="EMDB" id="EMD-30674"/>
<dbReference type="EMDB" id="EMD-30675"/>
<dbReference type="EMDB" id="EMD-30706"/>
<dbReference type="EMDB" id="EMD-4107"/>
<dbReference type="EMDB" id="EMD-9534"/>
<dbReference type="SMR" id="P07471"/>
<dbReference type="CORUM" id="P07471"/>
<dbReference type="DIP" id="DIP-39018N"/>
<dbReference type="FunCoup" id="P07471">
    <property type="interactions" value="757"/>
</dbReference>
<dbReference type="IntAct" id="P07471">
    <property type="interactions" value="2"/>
</dbReference>
<dbReference type="STRING" id="9913.ENSBTAP00000026002"/>
<dbReference type="GlyGen" id="P07471">
    <property type="glycosylation" value="1 site, 1 O-linked glycan (1 site)"/>
</dbReference>
<dbReference type="PaxDb" id="9913-ENSBTAP00000026002"/>
<dbReference type="Ensembl" id="ENSBTAT00000026002.5">
    <property type="protein sequence ID" value="ENSBTAP00000026002.3"/>
    <property type="gene ID" value="ENSBTAG00000019521.5"/>
</dbReference>
<dbReference type="GeneID" id="282200"/>
<dbReference type="KEGG" id="bta:282200"/>
<dbReference type="CTD" id="1339"/>
<dbReference type="VEuPathDB" id="HostDB:ENSBTAG00000019521"/>
<dbReference type="VGNC" id="VGNC:27637">
    <property type="gene designation" value="COX6A2"/>
</dbReference>
<dbReference type="eggNOG" id="KOG3469">
    <property type="taxonomic scope" value="Eukaryota"/>
</dbReference>
<dbReference type="GeneTree" id="ENSGT00940000162257"/>
<dbReference type="HOGENOM" id="CLU_122515_1_1_1"/>
<dbReference type="InParanoid" id="P07471"/>
<dbReference type="OMA" id="EPFAKYE"/>
<dbReference type="OrthoDB" id="5947505at2759"/>
<dbReference type="TreeFam" id="TF105064"/>
<dbReference type="BRENDA" id="7.1.1.9">
    <property type="organism ID" value="908"/>
</dbReference>
<dbReference type="Reactome" id="R-BTA-5628897">
    <property type="pathway name" value="TP53 Regulates Metabolic Genes"/>
</dbReference>
<dbReference type="Reactome" id="R-BTA-611105">
    <property type="pathway name" value="Respiratory electron transport"/>
</dbReference>
<dbReference type="Reactome" id="R-BTA-9707564">
    <property type="pathway name" value="Cytoprotection by HMOX1"/>
</dbReference>
<dbReference type="Reactome" id="R-BTA-9864848">
    <property type="pathway name" value="Complex IV assembly"/>
</dbReference>
<dbReference type="UniPathway" id="UPA00705"/>
<dbReference type="EvolutionaryTrace" id="P07471"/>
<dbReference type="Proteomes" id="UP000009136">
    <property type="component" value="Chromosome 25"/>
</dbReference>
<dbReference type="Bgee" id="ENSBTAG00000019521">
    <property type="expression patterns" value="Expressed in laryngeal cartilage and 44 other cell types or tissues"/>
</dbReference>
<dbReference type="GO" id="GO:0005743">
    <property type="term" value="C:mitochondrial inner membrane"/>
    <property type="evidence" value="ECO:0007669"/>
    <property type="project" value="UniProtKB-SubCell"/>
</dbReference>
<dbReference type="GO" id="GO:0045277">
    <property type="term" value="C:respiratory chain complex IV"/>
    <property type="evidence" value="ECO:0000314"/>
    <property type="project" value="UniProtKB"/>
</dbReference>
<dbReference type="GO" id="GO:0030234">
    <property type="term" value="F:enzyme regulator activity"/>
    <property type="evidence" value="ECO:0000318"/>
    <property type="project" value="GO_Central"/>
</dbReference>
<dbReference type="GO" id="GO:0016491">
    <property type="term" value="F:oxidoreductase activity"/>
    <property type="evidence" value="ECO:0007669"/>
    <property type="project" value="UniProtKB-KW"/>
</dbReference>
<dbReference type="GO" id="GO:0006123">
    <property type="term" value="P:mitochondrial electron transport, cytochrome c to oxygen"/>
    <property type="evidence" value="ECO:0000318"/>
    <property type="project" value="GO_Central"/>
</dbReference>
<dbReference type="CDD" id="cd00925">
    <property type="entry name" value="Cyt_c_Oxidase_VIa"/>
    <property type="match status" value="1"/>
</dbReference>
<dbReference type="FunFam" id="4.10.95.10:FF:000001">
    <property type="entry name" value="Cytochrome c oxidase subunit 6A, mitochondrial"/>
    <property type="match status" value="1"/>
</dbReference>
<dbReference type="Gene3D" id="4.10.95.10">
    <property type="entry name" value="Cytochrome c oxidase, subunit VIa"/>
    <property type="match status" value="1"/>
</dbReference>
<dbReference type="InterPro" id="IPR001349">
    <property type="entry name" value="Cyt_c_oxidase_su6a"/>
</dbReference>
<dbReference type="InterPro" id="IPR018507">
    <property type="entry name" value="Cyt_c_oxidase_su6a_CS"/>
</dbReference>
<dbReference type="InterPro" id="IPR036418">
    <property type="entry name" value="Cyt_c_oxidase_su6a_sf"/>
</dbReference>
<dbReference type="PANTHER" id="PTHR11504">
    <property type="entry name" value="CYTOCHROME C OXIDASE POLYPEPTIDE VIA"/>
    <property type="match status" value="1"/>
</dbReference>
<dbReference type="PANTHER" id="PTHR11504:SF1">
    <property type="entry name" value="CYTOCHROME C OXIDASE SUBUNIT 6A2, MITOCHONDRIAL"/>
    <property type="match status" value="1"/>
</dbReference>
<dbReference type="Pfam" id="PF02046">
    <property type="entry name" value="COX6A"/>
    <property type="match status" value="1"/>
</dbReference>
<dbReference type="PIRSF" id="PIRSF000277">
    <property type="entry name" value="COX6A1"/>
    <property type="match status" value="1"/>
</dbReference>
<dbReference type="SUPFAM" id="SSF81411">
    <property type="entry name" value="Mitochondrial cytochrome c oxidase subunit VIa"/>
    <property type="match status" value="1"/>
</dbReference>
<dbReference type="PROSITE" id="PS01329">
    <property type="entry name" value="COX6A"/>
    <property type="match status" value="1"/>
</dbReference>
<name>CX6A2_BOVIN</name>
<gene>
    <name type="primary">COX6A2</name>
    <name type="synonym">COX6A</name>
</gene>
<reference key="1">
    <citation type="journal article" date="1991" name="Biochim. Biophys. Acta">
        <title>The cDNA for the heart/muscle isoform of bovine cytochrome c oxidase subunit VIa encodes a presequence.</title>
        <authorList>
            <person name="Smith E.O."/>
            <person name="Bement D.M."/>
            <person name="Grossman L.I."/>
            <person name="Lomax M.I."/>
        </authorList>
    </citation>
    <scope>NUCLEOTIDE SEQUENCE [MRNA]</scope>
    <source>
        <tissue>Heart</tissue>
    </source>
</reference>
<reference key="2">
    <citation type="journal article" date="1993" name="Biochim. Biophys. Acta">
        <title>Structural organization of the bovine gene for the heart/muscle isoform of cytochrome c oxidase subunit VIa.</title>
        <authorList>
            <person name="Smith E.O."/>
            <person name="Lomax M.I."/>
        </authorList>
    </citation>
    <scope>NUCLEOTIDE SEQUENCE [GENOMIC DNA]</scope>
</reference>
<reference key="3">
    <citation type="submission" date="2005-08" db="EMBL/GenBank/DDBJ databases">
        <authorList>
            <consortium name="NIH - Mammalian Gene Collection (MGC) project"/>
        </authorList>
    </citation>
    <scope>NUCLEOTIDE SEQUENCE [LARGE SCALE MRNA]</scope>
    <source>
        <strain>Hereford</strain>
        <tissue>Heart ventricle</tissue>
    </source>
</reference>
<reference key="4">
    <citation type="journal article" date="1985" name="Biol. Chem. Hoppe-Seyler">
        <title>Studies on cytochrome c oxidase, XII. Isolation and primary structure of polypeptide VIb from bovine heart.</title>
        <authorList>
            <person name="Meinecke L."/>
            <person name="Buse G."/>
        </authorList>
    </citation>
    <scope>PROTEIN SEQUENCE OF 13-96</scope>
    <source>
        <tissue>Heart</tissue>
    </source>
</reference>
<reference key="5">
    <citation type="journal article" date="2016" name="J. Biol. Chem.">
        <title>Purification of active respiratory supercomplex from bovine heart mitochondria enables functional studies.</title>
        <authorList>
            <person name="Shinzawa-Itoh K."/>
            <person name="Shimomura H."/>
            <person name="Yanagisawa S."/>
            <person name="Shimada S."/>
            <person name="Takahashi R."/>
            <person name="Oosaki M."/>
            <person name="Ogura T."/>
            <person name="Tsukihara T."/>
        </authorList>
    </citation>
    <scope>SUBUNIT</scope>
</reference>
<reference key="6">
    <citation type="journal article" date="1996" name="Science">
        <title>The whole structure of the 13-subunit oxidized cytochrome c oxidase at 2.8 A.</title>
        <authorList>
            <person name="Tsukihara T."/>
            <person name="Aoyama H."/>
            <person name="Yamashita E."/>
            <person name="Tomizaki T."/>
            <person name="Yamaguchi H."/>
            <person name="Shinzawa-Itoh K."/>
            <person name="Nakashima R."/>
            <person name="Yaono R."/>
            <person name="Yoshikawa S."/>
        </authorList>
    </citation>
    <scope>X-RAY CRYSTALLOGRAPHY (2.8 ANGSTROMS)</scope>
</reference>
<reference key="7">
    <citation type="journal article" date="1999" name="Acta Crystallogr. D">
        <title>Structure analysis of bovine heart cytochrome c oxidase at 2.8 A resolution.</title>
        <authorList>
            <person name="Tomizaki T."/>
            <person name="Yamashita E."/>
            <person name="Yamaguchi H."/>
            <person name="Aoyama H."/>
            <person name="Tsukihara T."/>
            <person name="Shinzawa-Itoh K."/>
            <person name="Nakashima R."/>
            <person name="Yaono R."/>
            <person name="Yoshikawa S."/>
        </authorList>
    </citation>
    <scope>X-RAY CRYSTALLOGRAPHY (2.8 ANGSTROMS)</scope>
    <source>
        <tissue>Heart</tissue>
    </source>
</reference>
<reference key="8">
    <citation type="journal article" date="2000" name="Acta Crystallogr. D">
        <title>X-ray structure of azide-bound fully oxidized cytochrome c oxidase from bovine heart at 2.9 A resolution.</title>
        <authorList>
            <person name="Fei M.J."/>
            <person name="Yamashita E."/>
            <person name="Inoue N."/>
            <person name="Yao M."/>
            <person name="Yamaguchi H."/>
            <person name="Tsukihara T."/>
            <person name="Shinzawa-Itoh K."/>
            <person name="Nakashima R."/>
            <person name="Yoshikawa S."/>
        </authorList>
    </citation>
    <scope>X-RAY CRYSTALLOGRAPHY (2.9 ANGSTROMS)</scope>
    <source>
        <tissue>Heart</tissue>
    </source>
</reference>
<reference key="9">
    <citation type="journal article" date="2010" name="Proc. Natl. Acad. Sci. U.S.A.">
        <title>Bovine cytochrome c oxidase structures enable O2 reduction with minimization of reactive oxygens and provide a proton-pumping gate.</title>
        <authorList>
            <person name="Muramoto K."/>
            <person name="Ohta K."/>
            <person name="Shinzawa-Itoh K."/>
            <person name="Kanda K."/>
            <person name="Taniguchi M."/>
            <person name="Nabekura H."/>
            <person name="Yamashita E."/>
            <person name="Tsukihara T."/>
            <person name="Yoshikawa S."/>
        </authorList>
    </citation>
    <scope>X-RAY CRYSTALLOGRAPHY (1.80 ANGSTROMS)</scope>
</reference>
<reference key="10">
    <citation type="journal article" date="2016" name="Elife">
        <title>Functional asymmetry and electron flow in the bovine respirasome.</title>
        <authorList>
            <person name="Sousa J.S."/>
            <person name="Mills D.J."/>
            <person name="Vonck J."/>
            <person name="Kuehlbrandt W."/>
        </authorList>
    </citation>
    <scope>STRUCTURE BY ELECTRON MICROSCOPY (9.10 ANGSTROMS) OF 13-96</scope>
</reference>
<reference key="11">
    <citation type="journal article" date="2016" name="J. Biol. Chem.">
        <title>The Mg2+-containing water cluster of mammalian cytochrome c oxidase collects four pumping proton equivalents in each catalytic cycle.</title>
        <authorList>
            <person name="Yano N."/>
            <person name="Muramoto K."/>
            <person name="Shimada A."/>
            <person name="Takemura S."/>
            <person name="Baba J."/>
            <person name="Fujisawa H."/>
            <person name="Mochizuki M."/>
            <person name="Shinzawa-Itoh K."/>
            <person name="Yamashita E."/>
            <person name="Tsukihara T."/>
            <person name="Yoshikawa S."/>
        </authorList>
    </citation>
    <scope>X-RAY CRYSTALLOGRAPHY (1.50 ANGSTROMS)</scope>
</reference>
<reference key="12">
    <citation type="journal article" date="2019" name="Proc. Natl. Acad. Sci. U.S.A.">
        <title>Monomeric structure of an active form of bovine cytochrome c oxidase.</title>
        <authorList>
            <person name="Shinzawa-Itoh K."/>
            <person name="Sugimura T."/>
            <person name="Misaki T."/>
            <person name="Tadehara Y."/>
            <person name="Yamamoto S."/>
            <person name="Hanada M."/>
            <person name="Yano N."/>
            <person name="Nakagawa T."/>
            <person name="Uene S."/>
            <person name="Yamada T."/>
            <person name="Aoyama H."/>
            <person name="Yamashita E."/>
            <person name="Tsukihara T."/>
            <person name="Yoshikawa S."/>
            <person name="Muramoto K."/>
        </authorList>
    </citation>
    <scope>X-RAY CRYSTALLOGRAPHY (1.85 ANGSTROMS)</scope>
</reference>
<feature type="transit peptide" description="Mitochondrion" evidence="6">
    <location>
        <begin position="1"/>
        <end position="12"/>
    </location>
</feature>
<feature type="chain" id="PRO_0000006115" description="Cytochrome c oxidase subunit 6A2, mitochondrial">
    <location>
        <begin position="13"/>
        <end position="97"/>
    </location>
</feature>
<feature type="topological domain" description="Mitochondrial matrix" evidence="4">
    <location>
        <begin position="13"/>
        <end position="24"/>
    </location>
</feature>
<feature type="transmembrane region" description="Helical" evidence="4">
    <location>
        <begin position="25"/>
        <end position="49"/>
    </location>
</feature>
<feature type="topological domain" description="Mitochondrial intermembrane" evidence="4">
    <location>
        <begin position="50"/>
        <end position="97"/>
    </location>
</feature>
<feature type="strand" evidence="11">
    <location>
        <begin position="21"/>
        <end position="23"/>
    </location>
</feature>
<feature type="helix" evidence="12">
    <location>
        <begin position="25"/>
        <end position="34"/>
    </location>
</feature>
<feature type="helix" evidence="12">
    <location>
        <begin position="36"/>
        <end position="50"/>
    </location>
</feature>
<feature type="strand" evidence="12">
    <location>
        <begin position="77"/>
        <end position="79"/>
    </location>
</feature>
<feature type="turn" evidence="12">
    <location>
        <begin position="85"/>
        <end position="87"/>
    </location>
</feature>
<feature type="strand" evidence="10">
    <location>
        <begin position="91"/>
        <end position="93"/>
    </location>
</feature>
<organism>
    <name type="scientific">Bos taurus</name>
    <name type="common">Bovine</name>
    <dbReference type="NCBI Taxonomy" id="9913"/>
    <lineage>
        <taxon>Eukaryota</taxon>
        <taxon>Metazoa</taxon>
        <taxon>Chordata</taxon>
        <taxon>Craniata</taxon>
        <taxon>Vertebrata</taxon>
        <taxon>Euteleostomi</taxon>
        <taxon>Mammalia</taxon>
        <taxon>Eutheria</taxon>
        <taxon>Laurasiatheria</taxon>
        <taxon>Artiodactyla</taxon>
        <taxon>Ruminantia</taxon>
        <taxon>Pecora</taxon>
        <taxon>Bovidae</taxon>
        <taxon>Bovinae</taxon>
        <taxon>Bos</taxon>
    </lineage>
</organism>
<keyword id="KW-0002">3D-structure</keyword>
<keyword id="KW-0903">Direct protein sequencing</keyword>
<keyword id="KW-0472">Membrane</keyword>
<keyword id="KW-0496">Mitochondrion</keyword>
<keyword id="KW-0999">Mitochondrion inner membrane</keyword>
<keyword id="KW-0560">Oxidoreductase</keyword>
<keyword id="KW-1185">Reference proteome</keyword>
<keyword id="KW-0809">Transit peptide</keyword>
<keyword id="KW-0812">Transmembrane</keyword>
<keyword id="KW-1133">Transmembrane helix</keyword>
<evidence type="ECO:0000250" key="1">
    <source>
        <dbReference type="UniProtKB" id="P32799"/>
    </source>
</evidence>
<evidence type="ECO:0000250" key="2">
    <source>
        <dbReference type="UniProtKB" id="P43023"/>
    </source>
</evidence>
<evidence type="ECO:0000269" key="3">
    <source>
    </source>
</evidence>
<evidence type="ECO:0000269" key="4">
    <source>
    </source>
</evidence>
<evidence type="ECO:0000269" key="5">
    <source>
    </source>
</evidence>
<evidence type="ECO:0000269" key="6">
    <source>
    </source>
</evidence>
<evidence type="ECO:0000269" key="7">
    <source>
    </source>
</evidence>
<evidence type="ECO:0000269" key="8">
    <source>
    </source>
</evidence>
<evidence type="ECO:0000305" key="9"/>
<evidence type="ECO:0007829" key="10">
    <source>
        <dbReference type="PDB" id="1OCC"/>
    </source>
</evidence>
<evidence type="ECO:0007829" key="11">
    <source>
        <dbReference type="PDB" id="1OCR"/>
    </source>
</evidence>
<evidence type="ECO:0007829" key="12">
    <source>
        <dbReference type="PDB" id="7COH"/>
    </source>
</evidence>
<proteinExistence type="evidence at protein level"/>
<protein>
    <recommendedName>
        <fullName>Cytochrome c oxidase subunit 6A2, mitochondrial</fullName>
    </recommendedName>
    <alternativeName>
        <fullName>Cytochrome c oxidase polypeptide VIa-heart</fullName>
        <shortName>COXVIAH</shortName>
    </alternativeName>
    <alternativeName>
        <fullName>Cytochrome c oxidase polypeptide VIb</fullName>
    </alternativeName>
</protein>